<protein>
    <recommendedName>
        <fullName evidence="1">Elongation factor P</fullName>
        <shortName evidence="1">EF-P</shortName>
    </recommendedName>
</protein>
<gene>
    <name evidence="1" type="primary">efp</name>
    <name type="ordered locus">CLJ_B2084</name>
</gene>
<keyword id="KW-0963">Cytoplasm</keyword>
<keyword id="KW-0251">Elongation factor</keyword>
<keyword id="KW-0648">Protein biosynthesis</keyword>
<organism>
    <name type="scientific">Clostridium botulinum (strain 657 / Type Ba4)</name>
    <dbReference type="NCBI Taxonomy" id="515621"/>
    <lineage>
        <taxon>Bacteria</taxon>
        <taxon>Bacillati</taxon>
        <taxon>Bacillota</taxon>
        <taxon>Clostridia</taxon>
        <taxon>Eubacteriales</taxon>
        <taxon>Clostridiaceae</taxon>
        <taxon>Clostridium</taxon>
    </lineage>
</organism>
<name>EFP_CLOB6</name>
<dbReference type="EMBL" id="CP001083">
    <property type="protein sequence ID" value="ACQ54798.1"/>
    <property type="molecule type" value="Genomic_DNA"/>
</dbReference>
<dbReference type="RefSeq" id="WP_003358905.1">
    <property type="nucleotide sequence ID" value="NC_012658.1"/>
</dbReference>
<dbReference type="SMR" id="C3KXD8"/>
<dbReference type="GeneID" id="5186152"/>
<dbReference type="KEGG" id="cbi:CLJ_B2084"/>
<dbReference type="HOGENOM" id="CLU_074944_0_1_9"/>
<dbReference type="UniPathway" id="UPA00345"/>
<dbReference type="Proteomes" id="UP000002333">
    <property type="component" value="Chromosome"/>
</dbReference>
<dbReference type="GO" id="GO:0005737">
    <property type="term" value="C:cytoplasm"/>
    <property type="evidence" value="ECO:0007669"/>
    <property type="project" value="UniProtKB-SubCell"/>
</dbReference>
<dbReference type="GO" id="GO:0003746">
    <property type="term" value="F:translation elongation factor activity"/>
    <property type="evidence" value="ECO:0007669"/>
    <property type="project" value="UniProtKB-UniRule"/>
</dbReference>
<dbReference type="GO" id="GO:0043043">
    <property type="term" value="P:peptide biosynthetic process"/>
    <property type="evidence" value="ECO:0007669"/>
    <property type="project" value="InterPro"/>
</dbReference>
<dbReference type="CDD" id="cd04470">
    <property type="entry name" value="S1_EF-P_repeat_1"/>
    <property type="match status" value="1"/>
</dbReference>
<dbReference type="CDD" id="cd05794">
    <property type="entry name" value="S1_EF-P_repeat_2"/>
    <property type="match status" value="1"/>
</dbReference>
<dbReference type="FunFam" id="2.30.30.30:FF:000003">
    <property type="entry name" value="Elongation factor P"/>
    <property type="match status" value="1"/>
</dbReference>
<dbReference type="FunFam" id="2.40.50.140:FF:000004">
    <property type="entry name" value="Elongation factor P"/>
    <property type="match status" value="1"/>
</dbReference>
<dbReference type="FunFam" id="2.40.50.140:FF:000009">
    <property type="entry name" value="Elongation factor P"/>
    <property type="match status" value="1"/>
</dbReference>
<dbReference type="Gene3D" id="2.30.30.30">
    <property type="match status" value="1"/>
</dbReference>
<dbReference type="Gene3D" id="2.40.50.140">
    <property type="entry name" value="Nucleic acid-binding proteins"/>
    <property type="match status" value="2"/>
</dbReference>
<dbReference type="HAMAP" id="MF_00141">
    <property type="entry name" value="EF_P"/>
    <property type="match status" value="1"/>
</dbReference>
<dbReference type="InterPro" id="IPR015365">
    <property type="entry name" value="Elong-fact-P_C"/>
</dbReference>
<dbReference type="InterPro" id="IPR012340">
    <property type="entry name" value="NA-bd_OB-fold"/>
</dbReference>
<dbReference type="InterPro" id="IPR014722">
    <property type="entry name" value="Rib_uL2_dom2"/>
</dbReference>
<dbReference type="InterPro" id="IPR020599">
    <property type="entry name" value="Transl_elong_fac_P/YeiP"/>
</dbReference>
<dbReference type="InterPro" id="IPR013185">
    <property type="entry name" value="Transl_elong_KOW-like"/>
</dbReference>
<dbReference type="InterPro" id="IPR001059">
    <property type="entry name" value="Transl_elong_P/YeiP_cen"/>
</dbReference>
<dbReference type="InterPro" id="IPR013852">
    <property type="entry name" value="Transl_elong_P/YeiP_CS"/>
</dbReference>
<dbReference type="InterPro" id="IPR011768">
    <property type="entry name" value="Transl_elongation_fac_P"/>
</dbReference>
<dbReference type="InterPro" id="IPR008991">
    <property type="entry name" value="Translation_prot_SH3-like_sf"/>
</dbReference>
<dbReference type="NCBIfam" id="TIGR00038">
    <property type="entry name" value="efp"/>
    <property type="match status" value="1"/>
</dbReference>
<dbReference type="NCBIfam" id="NF001810">
    <property type="entry name" value="PRK00529.1"/>
    <property type="match status" value="1"/>
</dbReference>
<dbReference type="PANTHER" id="PTHR30053">
    <property type="entry name" value="ELONGATION FACTOR P"/>
    <property type="match status" value="1"/>
</dbReference>
<dbReference type="PANTHER" id="PTHR30053:SF12">
    <property type="entry name" value="ELONGATION FACTOR P (EF-P) FAMILY PROTEIN"/>
    <property type="match status" value="1"/>
</dbReference>
<dbReference type="Pfam" id="PF01132">
    <property type="entry name" value="EFP"/>
    <property type="match status" value="1"/>
</dbReference>
<dbReference type="Pfam" id="PF08207">
    <property type="entry name" value="EFP_N"/>
    <property type="match status" value="1"/>
</dbReference>
<dbReference type="Pfam" id="PF09285">
    <property type="entry name" value="Elong-fact-P_C"/>
    <property type="match status" value="1"/>
</dbReference>
<dbReference type="PIRSF" id="PIRSF005901">
    <property type="entry name" value="EF-P"/>
    <property type="match status" value="1"/>
</dbReference>
<dbReference type="SMART" id="SM01185">
    <property type="entry name" value="EFP"/>
    <property type="match status" value="1"/>
</dbReference>
<dbReference type="SMART" id="SM00841">
    <property type="entry name" value="Elong-fact-P_C"/>
    <property type="match status" value="1"/>
</dbReference>
<dbReference type="SUPFAM" id="SSF50249">
    <property type="entry name" value="Nucleic acid-binding proteins"/>
    <property type="match status" value="2"/>
</dbReference>
<dbReference type="SUPFAM" id="SSF50104">
    <property type="entry name" value="Translation proteins SH3-like domain"/>
    <property type="match status" value="1"/>
</dbReference>
<dbReference type="PROSITE" id="PS01275">
    <property type="entry name" value="EFP"/>
    <property type="match status" value="1"/>
</dbReference>
<accession>C3KXD8</accession>
<feature type="chain" id="PRO_1000203260" description="Elongation factor P">
    <location>
        <begin position="1"/>
        <end position="185"/>
    </location>
</feature>
<comment type="function">
    <text evidence="1">Involved in peptide bond synthesis. Stimulates efficient translation and peptide-bond synthesis on native or reconstituted 70S ribosomes in vitro. Probably functions indirectly by altering the affinity of the ribosome for aminoacyl-tRNA, thus increasing their reactivity as acceptors for peptidyl transferase.</text>
</comment>
<comment type="pathway">
    <text evidence="1">Protein biosynthesis; polypeptide chain elongation.</text>
</comment>
<comment type="subcellular location">
    <subcellularLocation>
        <location evidence="1">Cytoplasm</location>
    </subcellularLocation>
</comment>
<comment type="similarity">
    <text evidence="1">Belongs to the elongation factor P family.</text>
</comment>
<evidence type="ECO:0000255" key="1">
    <source>
        <dbReference type="HAMAP-Rule" id="MF_00141"/>
    </source>
</evidence>
<sequence>MISAGDLRKGTTFEQDGQVYVVVEFLHVKPGKGAAFVRTKLKNAITGAVTETTFNPTAKLQEAVIERKEMQYLYTDGELYYFMDQETFEQIPLNYDKVEEAIKFLKENMFATIKFFKGEAFSVEAPNFVELLISHTEPGAKGNTTSNVMKPATLETGATIQVPLFVNEGETIRVDTRTGEYMERV</sequence>
<reference key="1">
    <citation type="submission" date="2008-05" db="EMBL/GenBank/DDBJ databases">
        <title>Genome sequence of Clostridium botulinum Ba4 strain 657.</title>
        <authorList>
            <person name="Shrivastava S."/>
            <person name="Brown J.L."/>
            <person name="Bruce D."/>
            <person name="Detter C."/>
            <person name="Munk C."/>
            <person name="Smith L.A."/>
            <person name="Smith T.J."/>
            <person name="Sutton G."/>
            <person name="Brettin T.S."/>
        </authorList>
    </citation>
    <scope>NUCLEOTIDE SEQUENCE [LARGE SCALE GENOMIC DNA]</scope>
    <source>
        <strain>657 / Type Ba4</strain>
    </source>
</reference>
<proteinExistence type="inferred from homology"/>